<proteinExistence type="inferred from homology"/>
<evidence type="ECO:0000250" key="1"/>
<evidence type="ECO:0000255" key="2"/>
<evidence type="ECO:0000256" key="3">
    <source>
        <dbReference type="SAM" id="MobiDB-lite"/>
    </source>
</evidence>
<evidence type="ECO:0000305" key="4"/>
<keyword id="KW-0175">Coiled coil</keyword>
<keyword id="KW-0539">Nucleus</keyword>
<keyword id="KW-1185">Reference proteome</keyword>
<keyword id="KW-0687">Ribonucleoprotein</keyword>
<keyword id="KW-0690">Ribosome biogenesis</keyword>
<keyword id="KW-0698">rRNA processing</keyword>
<feature type="chain" id="PRO_0000397608" description="rRNA biogenesis protein RRP36">
    <location>
        <begin position="1"/>
        <end position="345"/>
    </location>
</feature>
<feature type="region of interest" description="Disordered" evidence="3">
    <location>
        <begin position="1"/>
        <end position="167"/>
    </location>
</feature>
<feature type="region of interest" description="Disordered" evidence="3">
    <location>
        <begin position="312"/>
        <end position="345"/>
    </location>
</feature>
<feature type="coiled-coil region" evidence="2">
    <location>
        <begin position="219"/>
        <end position="267"/>
    </location>
</feature>
<feature type="compositionally biased region" description="Acidic residues" evidence="3">
    <location>
        <begin position="32"/>
        <end position="59"/>
    </location>
</feature>
<feature type="compositionally biased region" description="Polar residues" evidence="3">
    <location>
        <begin position="66"/>
        <end position="76"/>
    </location>
</feature>
<feature type="compositionally biased region" description="Low complexity" evidence="3">
    <location>
        <begin position="78"/>
        <end position="87"/>
    </location>
</feature>
<feature type="compositionally biased region" description="Polar residues" evidence="3">
    <location>
        <begin position="108"/>
        <end position="119"/>
    </location>
</feature>
<feature type="compositionally biased region" description="Basic residues" evidence="3">
    <location>
        <begin position="143"/>
        <end position="153"/>
    </location>
</feature>
<feature type="compositionally biased region" description="Basic and acidic residues" evidence="3">
    <location>
        <begin position="312"/>
        <end position="322"/>
    </location>
</feature>
<feature type="compositionally biased region" description="Basic and acidic residues" evidence="3">
    <location>
        <begin position="330"/>
        <end position="345"/>
    </location>
</feature>
<name>RRP36_AJECH</name>
<sequence>MPISSTLNQRVRARLEDDDFGHVSDESVSNEALDEGESNEDTEQDNSDQRETDDDDTEDDGHTEISDINPSLNTISFGALAKAQAALGKRKRRTTSTTDITPKRTKVLSRQSPTPSTSSNKEHDQGQGLSEFQKHLASNAKKPPQKLTHRTSKHAPTIQSSRHAVSRKRTILEPLAVPKPRDPRFDSVVLSHSTNGDPSTAANADIHARNNYAFLNHYRTDEIAELRKQVSALQTKKKKTERDDHEIVRLKREITSMSDRQRAFERKEMEREVLVQHRRREKELIREGKKSQPYFLKKGEVKREVIAKRFTEMSGKEKQRALERRRKKVAGKERKEMPWGRRGVE</sequence>
<accession>C6HHV6</accession>
<gene>
    <name type="primary">RRP36</name>
    <name type="ORF">HCDG_05787</name>
</gene>
<comment type="function">
    <text evidence="1">Component of the 90S pre-ribosome involved in the maturation of rRNAs. Required for early cleavages of the pre-RNAs in the 40S ribosomal subunit maturation pathway (By similarity).</text>
</comment>
<comment type="subunit">
    <text evidence="1">Associates with 90S and pre-40S pre-ribosomal particles.</text>
</comment>
<comment type="subcellular location">
    <subcellularLocation>
        <location evidence="1">Nucleus</location>
        <location evidence="1">Nucleolus</location>
    </subcellularLocation>
</comment>
<comment type="similarity">
    <text evidence="4">Belongs to the RRP36 family.</text>
</comment>
<reference key="1">
    <citation type="submission" date="2009-05" db="EMBL/GenBank/DDBJ databases">
        <title>The genome sequence of Ajellomyces capsulatus strain H143.</title>
        <authorList>
            <person name="Champion M."/>
            <person name="Cuomo C.A."/>
            <person name="Ma L.-J."/>
            <person name="Henn M.R."/>
            <person name="Sil A."/>
            <person name="Goldman B."/>
            <person name="Young S.K."/>
            <person name="Kodira C.D."/>
            <person name="Zeng Q."/>
            <person name="Koehrsen M."/>
            <person name="Alvarado L."/>
            <person name="Berlin A.M."/>
            <person name="Borenstein D."/>
            <person name="Chen Z."/>
            <person name="Engels R."/>
            <person name="Freedman E."/>
            <person name="Gellesch M."/>
            <person name="Goldberg J."/>
            <person name="Griggs A."/>
            <person name="Gujja S."/>
            <person name="Heiman D.I."/>
            <person name="Hepburn T.A."/>
            <person name="Howarth C."/>
            <person name="Jen D."/>
            <person name="Larson L."/>
            <person name="Lewis B."/>
            <person name="Mehta T."/>
            <person name="Park D."/>
            <person name="Pearson M."/>
            <person name="Roberts A."/>
            <person name="Saif S."/>
            <person name="Shea T.D."/>
            <person name="Shenoy N."/>
            <person name="Sisk P."/>
            <person name="Stolte C."/>
            <person name="Sykes S."/>
            <person name="Walk T."/>
            <person name="White J."/>
            <person name="Yandava C."/>
            <person name="Klein B."/>
            <person name="McEwen J.G."/>
            <person name="Puccia R."/>
            <person name="Goldman G.H."/>
            <person name="Felipe M.S."/>
            <person name="Nino-Vega G."/>
            <person name="San-Blas G."/>
            <person name="Taylor J.W."/>
            <person name="Mendoza L."/>
            <person name="Galagan J.E."/>
            <person name="Nusbaum C."/>
            <person name="Birren B.W."/>
        </authorList>
    </citation>
    <scope>NUCLEOTIDE SEQUENCE [LARGE SCALE GENOMIC DNA]</scope>
    <source>
        <strain>H143</strain>
    </source>
</reference>
<dbReference type="EMBL" id="GG692427">
    <property type="protein sequence ID" value="EER40390.1"/>
    <property type="molecule type" value="Genomic_DNA"/>
</dbReference>
<dbReference type="SMR" id="C6HHV6"/>
<dbReference type="STRING" id="544712.C6HHV6"/>
<dbReference type="VEuPathDB" id="FungiDB:HCDG_05787"/>
<dbReference type="eggNOG" id="KOG3190">
    <property type="taxonomic scope" value="Eukaryota"/>
</dbReference>
<dbReference type="HOGENOM" id="CLU_048802_0_0_1"/>
<dbReference type="OMA" id="ERKEMPW"/>
<dbReference type="OrthoDB" id="10611at299071"/>
<dbReference type="Proteomes" id="UP000002624">
    <property type="component" value="Unassembled WGS sequence"/>
</dbReference>
<dbReference type="GO" id="GO:0030686">
    <property type="term" value="C:90S preribosome"/>
    <property type="evidence" value="ECO:0007669"/>
    <property type="project" value="TreeGrafter"/>
</dbReference>
<dbReference type="GO" id="GO:0005730">
    <property type="term" value="C:nucleolus"/>
    <property type="evidence" value="ECO:0007669"/>
    <property type="project" value="UniProtKB-SubCell"/>
</dbReference>
<dbReference type="GO" id="GO:0000462">
    <property type="term" value="P:maturation of SSU-rRNA from tricistronic rRNA transcript (SSU-rRNA, 5.8S rRNA, LSU-rRNA)"/>
    <property type="evidence" value="ECO:0007669"/>
    <property type="project" value="TreeGrafter"/>
</dbReference>
<dbReference type="InterPro" id="IPR009292">
    <property type="entry name" value="RRP36"/>
</dbReference>
<dbReference type="PANTHER" id="PTHR21738">
    <property type="entry name" value="RIBOSOMAL RNA PROCESSING PROTEIN 36 HOMOLOG"/>
    <property type="match status" value="1"/>
</dbReference>
<dbReference type="PANTHER" id="PTHR21738:SF0">
    <property type="entry name" value="RIBOSOMAL RNA PROCESSING PROTEIN 36 HOMOLOG"/>
    <property type="match status" value="1"/>
</dbReference>
<dbReference type="Pfam" id="PF06102">
    <property type="entry name" value="RRP36"/>
    <property type="match status" value="1"/>
</dbReference>
<organism>
    <name type="scientific">Ajellomyces capsulatus (strain H143)</name>
    <name type="common">Darling's disease fungus</name>
    <name type="synonym">Histoplasma capsulatum</name>
    <dbReference type="NCBI Taxonomy" id="544712"/>
    <lineage>
        <taxon>Eukaryota</taxon>
        <taxon>Fungi</taxon>
        <taxon>Dikarya</taxon>
        <taxon>Ascomycota</taxon>
        <taxon>Pezizomycotina</taxon>
        <taxon>Eurotiomycetes</taxon>
        <taxon>Eurotiomycetidae</taxon>
        <taxon>Onygenales</taxon>
        <taxon>Ajellomycetaceae</taxon>
        <taxon>Histoplasma</taxon>
    </lineage>
</organism>
<protein>
    <recommendedName>
        <fullName>rRNA biogenesis protein RRP36</fullName>
    </recommendedName>
    <alternativeName>
        <fullName>Ribosomal RNA-processing protein 36</fullName>
    </alternativeName>
</protein>